<feature type="chain" id="PRO_0000207768" description="Photosystem I reaction center subunit XII">
    <location>
        <begin position="1"/>
        <end position="30"/>
    </location>
</feature>
<feature type="transmembrane region" description="Helical" evidence="1">
    <location>
        <begin position="7"/>
        <end position="26"/>
    </location>
</feature>
<reference key="1">
    <citation type="journal article" date="1995" name="Plant Mol. Biol. Rep.">
        <title>Complete nucleotide sequence of the Porphyra purpurea chloroplast genome.</title>
        <authorList>
            <person name="Reith M.E."/>
            <person name="Munholland J."/>
        </authorList>
    </citation>
    <scope>NUCLEOTIDE SEQUENCE [LARGE SCALE GENOMIC DNA]</scope>
    <source>
        <strain>Avonport</strain>
    </source>
</reference>
<name>PSAM_PORPU</name>
<sequence>MIDDSQIFVALLFALVSAVLAIRLGKELYQ</sequence>
<accession>P51395</accession>
<evidence type="ECO:0000255" key="1">
    <source>
        <dbReference type="HAMAP-Rule" id="MF_00828"/>
    </source>
</evidence>
<keyword id="KW-0150">Chloroplast</keyword>
<keyword id="KW-0472">Membrane</keyword>
<keyword id="KW-0602">Photosynthesis</keyword>
<keyword id="KW-0603">Photosystem I</keyword>
<keyword id="KW-0934">Plastid</keyword>
<keyword id="KW-0793">Thylakoid</keyword>
<keyword id="KW-0812">Transmembrane</keyword>
<keyword id="KW-1133">Transmembrane helix</keyword>
<protein>
    <recommendedName>
        <fullName evidence="1">Photosystem I reaction center subunit XII</fullName>
    </recommendedName>
    <alternativeName>
        <fullName evidence="1">PSI-M</fullName>
    </alternativeName>
</protein>
<organism>
    <name type="scientific">Porphyra purpurea</name>
    <name type="common">Red seaweed</name>
    <name type="synonym">Ulva purpurea</name>
    <dbReference type="NCBI Taxonomy" id="2787"/>
    <lineage>
        <taxon>Eukaryota</taxon>
        <taxon>Rhodophyta</taxon>
        <taxon>Bangiophyceae</taxon>
        <taxon>Bangiales</taxon>
        <taxon>Bangiaceae</taxon>
        <taxon>Porphyra</taxon>
    </lineage>
</organism>
<proteinExistence type="inferred from homology"/>
<gene>
    <name evidence="1" type="primary">psaM</name>
</gene>
<comment type="subcellular location">
    <subcellularLocation>
        <location evidence="1">Plastid</location>
        <location evidence="1">Chloroplast thylakoid membrane</location>
        <topology evidence="1">Single-pass membrane protein</topology>
    </subcellularLocation>
</comment>
<comment type="similarity">
    <text evidence="1">Belongs to the PsaM family.</text>
</comment>
<geneLocation type="chloroplast"/>
<dbReference type="EMBL" id="U38804">
    <property type="protein sequence ID" value="AAC08281.1"/>
    <property type="molecule type" value="Genomic_DNA"/>
</dbReference>
<dbReference type="PIR" id="S73316">
    <property type="entry name" value="S73316"/>
</dbReference>
<dbReference type="RefSeq" id="NP_054005.1">
    <property type="nucleotide sequence ID" value="NC_000925.1"/>
</dbReference>
<dbReference type="SMR" id="P51395"/>
<dbReference type="GeneID" id="810035"/>
<dbReference type="GO" id="GO:0009535">
    <property type="term" value="C:chloroplast thylakoid membrane"/>
    <property type="evidence" value="ECO:0007669"/>
    <property type="project" value="UniProtKB-SubCell"/>
</dbReference>
<dbReference type="GO" id="GO:0009522">
    <property type="term" value="C:photosystem I"/>
    <property type="evidence" value="ECO:0007669"/>
    <property type="project" value="UniProtKB-KW"/>
</dbReference>
<dbReference type="GO" id="GO:0015979">
    <property type="term" value="P:photosynthesis"/>
    <property type="evidence" value="ECO:0007669"/>
    <property type="project" value="UniProtKB-UniRule"/>
</dbReference>
<dbReference type="HAMAP" id="MF_00828">
    <property type="entry name" value="PSI_PsaM"/>
    <property type="match status" value="1"/>
</dbReference>
<dbReference type="InterPro" id="IPR010010">
    <property type="entry name" value="PSI_PsaM"/>
</dbReference>
<dbReference type="InterPro" id="IPR037279">
    <property type="entry name" value="PSI_PsaM_sf"/>
</dbReference>
<dbReference type="NCBIfam" id="TIGR03053">
    <property type="entry name" value="PS_I_psaM"/>
    <property type="match status" value="1"/>
</dbReference>
<dbReference type="Pfam" id="PF07465">
    <property type="entry name" value="PsaM"/>
    <property type="match status" value="1"/>
</dbReference>
<dbReference type="SUPFAM" id="SSF81548">
    <property type="entry name" value="Subunit XII of photosystem I reaction centre, PsaM"/>
    <property type="match status" value="1"/>
</dbReference>